<dbReference type="EMBL" id="CP000607">
    <property type="protein sequence ID" value="ABP37619.1"/>
    <property type="molecule type" value="Genomic_DNA"/>
</dbReference>
<dbReference type="SMR" id="A4SGL0"/>
<dbReference type="STRING" id="290318.Cvib_1609"/>
<dbReference type="KEGG" id="pvi:Cvib_1609"/>
<dbReference type="eggNOG" id="COG0080">
    <property type="taxonomic scope" value="Bacteria"/>
</dbReference>
<dbReference type="HOGENOM" id="CLU_074237_2_1_10"/>
<dbReference type="OrthoDB" id="9802408at2"/>
<dbReference type="GO" id="GO:0022625">
    <property type="term" value="C:cytosolic large ribosomal subunit"/>
    <property type="evidence" value="ECO:0007669"/>
    <property type="project" value="TreeGrafter"/>
</dbReference>
<dbReference type="GO" id="GO:0070180">
    <property type="term" value="F:large ribosomal subunit rRNA binding"/>
    <property type="evidence" value="ECO:0007669"/>
    <property type="project" value="UniProtKB-UniRule"/>
</dbReference>
<dbReference type="GO" id="GO:0003735">
    <property type="term" value="F:structural constituent of ribosome"/>
    <property type="evidence" value="ECO:0007669"/>
    <property type="project" value="InterPro"/>
</dbReference>
<dbReference type="GO" id="GO:0006412">
    <property type="term" value="P:translation"/>
    <property type="evidence" value="ECO:0007669"/>
    <property type="project" value="UniProtKB-UniRule"/>
</dbReference>
<dbReference type="CDD" id="cd00349">
    <property type="entry name" value="Ribosomal_L11"/>
    <property type="match status" value="1"/>
</dbReference>
<dbReference type="FunFam" id="1.10.10.250:FF:000001">
    <property type="entry name" value="50S ribosomal protein L11"/>
    <property type="match status" value="1"/>
</dbReference>
<dbReference type="FunFam" id="3.30.1550.10:FF:000001">
    <property type="entry name" value="50S ribosomal protein L11"/>
    <property type="match status" value="1"/>
</dbReference>
<dbReference type="Gene3D" id="1.10.10.250">
    <property type="entry name" value="Ribosomal protein L11, C-terminal domain"/>
    <property type="match status" value="1"/>
</dbReference>
<dbReference type="Gene3D" id="3.30.1550.10">
    <property type="entry name" value="Ribosomal protein L11/L12, N-terminal domain"/>
    <property type="match status" value="1"/>
</dbReference>
<dbReference type="HAMAP" id="MF_00736">
    <property type="entry name" value="Ribosomal_uL11"/>
    <property type="match status" value="1"/>
</dbReference>
<dbReference type="InterPro" id="IPR000911">
    <property type="entry name" value="Ribosomal_uL11"/>
</dbReference>
<dbReference type="InterPro" id="IPR006519">
    <property type="entry name" value="Ribosomal_uL11_bac-typ"/>
</dbReference>
<dbReference type="InterPro" id="IPR020783">
    <property type="entry name" value="Ribosomal_uL11_C"/>
</dbReference>
<dbReference type="InterPro" id="IPR036769">
    <property type="entry name" value="Ribosomal_uL11_C_sf"/>
</dbReference>
<dbReference type="InterPro" id="IPR020784">
    <property type="entry name" value="Ribosomal_uL11_N"/>
</dbReference>
<dbReference type="InterPro" id="IPR036796">
    <property type="entry name" value="Ribosomal_uL11_N_sf"/>
</dbReference>
<dbReference type="NCBIfam" id="TIGR01632">
    <property type="entry name" value="L11_bact"/>
    <property type="match status" value="1"/>
</dbReference>
<dbReference type="PANTHER" id="PTHR11661">
    <property type="entry name" value="60S RIBOSOMAL PROTEIN L12"/>
    <property type="match status" value="1"/>
</dbReference>
<dbReference type="PANTHER" id="PTHR11661:SF1">
    <property type="entry name" value="LARGE RIBOSOMAL SUBUNIT PROTEIN UL11M"/>
    <property type="match status" value="1"/>
</dbReference>
<dbReference type="Pfam" id="PF00298">
    <property type="entry name" value="Ribosomal_L11"/>
    <property type="match status" value="1"/>
</dbReference>
<dbReference type="Pfam" id="PF03946">
    <property type="entry name" value="Ribosomal_L11_N"/>
    <property type="match status" value="1"/>
</dbReference>
<dbReference type="SMART" id="SM00649">
    <property type="entry name" value="RL11"/>
    <property type="match status" value="1"/>
</dbReference>
<dbReference type="SUPFAM" id="SSF54747">
    <property type="entry name" value="Ribosomal L11/L12e N-terminal domain"/>
    <property type="match status" value="1"/>
</dbReference>
<dbReference type="SUPFAM" id="SSF46906">
    <property type="entry name" value="Ribosomal protein L11, C-terminal domain"/>
    <property type="match status" value="1"/>
</dbReference>
<gene>
    <name evidence="1" type="primary">rplK</name>
    <name type="ordered locus">Cvib_1609</name>
</gene>
<evidence type="ECO:0000255" key="1">
    <source>
        <dbReference type="HAMAP-Rule" id="MF_00736"/>
    </source>
</evidence>
<evidence type="ECO:0000305" key="2"/>
<feature type="chain" id="PRO_1000083396" description="Large ribosomal subunit protein uL11">
    <location>
        <begin position="1"/>
        <end position="141"/>
    </location>
</feature>
<reference key="1">
    <citation type="submission" date="2007-03" db="EMBL/GenBank/DDBJ databases">
        <title>Complete sequence of Prosthecochloris vibrioformis DSM 265.</title>
        <authorList>
            <consortium name="US DOE Joint Genome Institute"/>
            <person name="Copeland A."/>
            <person name="Lucas S."/>
            <person name="Lapidus A."/>
            <person name="Barry K."/>
            <person name="Detter J.C."/>
            <person name="Glavina del Rio T."/>
            <person name="Hammon N."/>
            <person name="Israni S."/>
            <person name="Pitluck S."/>
            <person name="Schmutz J."/>
            <person name="Larimer F."/>
            <person name="Land M."/>
            <person name="Hauser L."/>
            <person name="Mikhailova N."/>
            <person name="Li T."/>
            <person name="Overmann J."/>
            <person name="Schuster S.C."/>
            <person name="Bryant D.A."/>
            <person name="Richardson P."/>
        </authorList>
    </citation>
    <scope>NUCLEOTIDE SEQUENCE [LARGE SCALE GENOMIC DNA]</scope>
    <source>
        <strain>DSM 265 / 1930</strain>
    </source>
</reference>
<protein>
    <recommendedName>
        <fullName evidence="1">Large ribosomal subunit protein uL11</fullName>
    </recommendedName>
    <alternativeName>
        <fullName evidence="2">50S ribosomal protein L11</fullName>
    </alternativeName>
</protein>
<proteinExistence type="inferred from homology"/>
<comment type="function">
    <text evidence="1">Forms part of the ribosomal stalk which helps the ribosome interact with GTP-bound translation factors.</text>
</comment>
<comment type="subunit">
    <text evidence="1">Part of the ribosomal stalk of the 50S ribosomal subunit. Interacts with L10 and the large rRNA to form the base of the stalk. L10 forms an elongated spine to which L12 dimers bind in a sequential fashion forming a multimeric L10(L12)X complex.</text>
</comment>
<comment type="PTM">
    <text evidence="1">One or more lysine residues are methylated.</text>
</comment>
<comment type="similarity">
    <text evidence="1">Belongs to the universal ribosomal protein uL11 family.</text>
</comment>
<keyword id="KW-0488">Methylation</keyword>
<keyword id="KW-0687">Ribonucleoprotein</keyword>
<keyword id="KW-0689">Ribosomal protein</keyword>
<keyword id="KW-0694">RNA-binding</keyword>
<keyword id="KW-0699">rRNA-binding</keyword>
<sequence>MAKKVIGFIKLQIPAGGANPAPPVGPALGQKGVNIMEFCKQFNAKTQSEAGMIIPVVITVYTDKSFTFITKTPPAAVLLLKEAGLQKGSGEPNRNKVGTVTREQVKKIAELKKPDLNAFDLRGAEEMIMGTARSMGIVIEE</sequence>
<accession>A4SGL0</accession>
<name>RL11_CHLPM</name>
<organism>
    <name type="scientific">Chlorobium phaeovibrioides (strain DSM 265 / 1930)</name>
    <name type="common">Prosthecochloris vibrioformis (strain DSM 265)</name>
    <dbReference type="NCBI Taxonomy" id="290318"/>
    <lineage>
        <taxon>Bacteria</taxon>
        <taxon>Pseudomonadati</taxon>
        <taxon>Chlorobiota</taxon>
        <taxon>Chlorobiia</taxon>
        <taxon>Chlorobiales</taxon>
        <taxon>Chlorobiaceae</taxon>
        <taxon>Chlorobium/Pelodictyon group</taxon>
        <taxon>Chlorobium</taxon>
    </lineage>
</organism>